<gene>
    <name evidence="1" type="primary">rpsS</name>
    <name type="ordered locus">Ssed_4313</name>
</gene>
<keyword id="KW-1185">Reference proteome</keyword>
<keyword id="KW-0687">Ribonucleoprotein</keyword>
<keyword id="KW-0689">Ribosomal protein</keyword>
<keyword id="KW-0694">RNA-binding</keyword>
<keyword id="KW-0699">rRNA-binding</keyword>
<dbReference type="EMBL" id="CP000821">
    <property type="protein sequence ID" value="ABV38917.1"/>
    <property type="molecule type" value="Genomic_DNA"/>
</dbReference>
<dbReference type="RefSeq" id="WP_006083596.1">
    <property type="nucleotide sequence ID" value="NC_009831.1"/>
</dbReference>
<dbReference type="SMR" id="A8G1E4"/>
<dbReference type="STRING" id="425104.Ssed_4313"/>
<dbReference type="GeneID" id="94726190"/>
<dbReference type="KEGG" id="sse:Ssed_4313"/>
<dbReference type="eggNOG" id="COG0185">
    <property type="taxonomic scope" value="Bacteria"/>
</dbReference>
<dbReference type="HOGENOM" id="CLU_144911_0_1_6"/>
<dbReference type="OrthoDB" id="9797833at2"/>
<dbReference type="Proteomes" id="UP000002015">
    <property type="component" value="Chromosome"/>
</dbReference>
<dbReference type="GO" id="GO:0005737">
    <property type="term" value="C:cytoplasm"/>
    <property type="evidence" value="ECO:0007669"/>
    <property type="project" value="UniProtKB-ARBA"/>
</dbReference>
<dbReference type="GO" id="GO:0015935">
    <property type="term" value="C:small ribosomal subunit"/>
    <property type="evidence" value="ECO:0007669"/>
    <property type="project" value="InterPro"/>
</dbReference>
<dbReference type="GO" id="GO:0019843">
    <property type="term" value="F:rRNA binding"/>
    <property type="evidence" value="ECO:0007669"/>
    <property type="project" value="UniProtKB-UniRule"/>
</dbReference>
<dbReference type="GO" id="GO:0003735">
    <property type="term" value="F:structural constituent of ribosome"/>
    <property type="evidence" value="ECO:0007669"/>
    <property type="project" value="InterPro"/>
</dbReference>
<dbReference type="GO" id="GO:0000028">
    <property type="term" value="P:ribosomal small subunit assembly"/>
    <property type="evidence" value="ECO:0007669"/>
    <property type="project" value="TreeGrafter"/>
</dbReference>
<dbReference type="GO" id="GO:0006412">
    <property type="term" value="P:translation"/>
    <property type="evidence" value="ECO:0007669"/>
    <property type="project" value="UniProtKB-UniRule"/>
</dbReference>
<dbReference type="FunFam" id="3.30.860.10:FF:000001">
    <property type="entry name" value="30S ribosomal protein S19"/>
    <property type="match status" value="1"/>
</dbReference>
<dbReference type="Gene3D" id="3.30.860.10">
    <property type="entry name" value="30s Ribosomal Protein S19, Chain A"/>
    <property type="match status" value="1"/>
</dbReference>
<dbReference type="HAMAP" id="MF_00531">
    <property type="entry name" value="Ribosomal_uS19"/>
    <property type="match status" value="1"/>
</dbReference>
<dbReference type="InterPro" id="IPR002222">
    <property type="entry name" value="Ribosomal_uS19"/>
</dbReference>
<dbReference type="InterPro" id="IPR005732">
    <property type="entry name" value="Ribosomal_uS19_bac-type"/>
</dbReference>
<dbReference type="InterPro" id="IPR020934">
    <property type="entry name" value="Ribosomal_uS19_CS"/>
</dbReference>
<dbReference type="InterPro" id="IPR023575">
    <property type="entry name" value="Ribosomal_uS19_SF"/>
</dbReference>
<dbReference type="NCBIfam" id="TIGR01050">
    <property type="entry name" value="rpsS_bact"/>
    <property type="match status" value="1"/>
</dbReference>
<dbReference type="PANTHER" id="PTHR11880">
    <property type="entry name" value="RIBOSOMAL PROTEIN S19P FAMILY MEMBER"/>
    <property type="match status" value="1"/>
</dbReference>
<dbReference type="PANTHER" id="PTHR11880:SF8">
    <property type="entry name" value="SMALL RIBOSOMAL SUBUNIT PROTEIN US19M"/>
    <property type="match status" value="1"/>
</dbReference>
<dbReference type="Pfam" id="PF00203">
    <property type="entry name" value="Ribosomal_S19"/>
    <property type="match status" value="1"/>
</dbReference>
<dbReference type="PIRSF" id="PIRSF002144">
    <property type="entry name" value="Ribosomal_S19"/>
    <property type="match status" value="1"/>
</dbReference>
<dbReference type="PRINTS" id="PR00975">
    <property type="entry name" value="RIBOSOMALS19"/>
</dbReference>
<dbReference type="SUPFAM" id="SSF54570">
    <property type="entry name" value="Ribosomal protein S19"/>
    <property type="match status" value="1"/>
</dbReference>
<dbReference type="PROSITE" id="PS00323">
    <property type="entry name" value="RIBOSOMAL_S19"/>
    <property type="match status" value="1"/>
</dbReference>
<proteinExistence type="inferred from homology"/>
<evidence type="ECO:0000255" key="1">
    <source>
        <dbReference type="HAMAP-Rule" id="MF_00531"/>
    </source>
</evidence>
<evidence type="ECO:0000305" key="2"/>
<reference key="1">
    <citation type="submission" date="2007-08" db="EMBL/GenBank/DDBJ databases">
        <title>Complete sequence of Shewanella sediminis HAW-EB3.</title>
        <authorList>
            <consortium name="US DOE Joint Genome Institute"/>
            <person name="Copeland A."/>
            <person name="Lucas S."/>
            <person name="Lapidus A."/>
            <person name="Barry K."/>
            <person name="Glavina del Rio T."/>
            <person name="Dalin E."/>
            <person name="Tice H."/>
            <person name="Pitluck S."/>
            <person name="Chertkov O."/>
            <person name="Brettin T."/>
            <person name="Bruce D."/>
            <person name="Detter J.C."/>
            <person name="Han C."/>
            <person name="Schmutz J."/>
            <person name="Larimer F."/>
            <person name="Land M."/>
            <person name="Hauser L."/>
            <person name="Kyrpides N."/>
            <person name="Kim E."/>
            <person name="Zhao J.-S."/>
            <person name="Richardson P."/>
        </authorList>
    </citation>
    <scope>NUCLEOTIDE SEQUENCE [LARGE SCALE GENOMIC DNA]</scope>
    <source>
        <strain>HAW-EB3</strain>
    </source>
</reference>
<protein>
    <recommendedName>
        <fullName evidence="1">Small ribosomal subunit protein uS19</fullName>
    </recommendedName>
    <alternativeName>
        <fullName evidence="2">30S ribosomal protein S19</fullName>
    </alternativeName>
</protein>
<sequence>MPRSLKKGPFIDLHLLKKVEKAMEAGDKKPIKTWSRRSMIIPNMIGLTIAVHNGRQHVPVFVTDEMIGHKLGEFSPTRTYRGHAADKKAKKR</sequence>
<comment type="function">
    <text evidence="1">Protein S19 forms a complex with S13 that binds strongly to the 16S ribosomal RNA.</text>
</comment>
<comment type="similarity">
    <text evidence="1">Belongs to the universal ribosomal protein uS19 family.</text>
</comment>
<feature type="chain" id="PRO_1000081795" description="Small ribosomal subunit protein uS19">
    <location>
        <begin position="1"/>
        <end position="92"/>
    </location>
</feature>
<name>RS19_SHESH</name>
<accession>A8G1E4</accession>
<organism>
    <name type="scientific">Shewanella sediminis (strain HAW-EB3)</name>
    <dbReference type="NCBI Taxonomy" id="425104"/>
    <lineage>
        <taxon>Bacteria</taxon>
        <taxon>Pseudomonadati</taxon>
        <taxon>Pseudomonadota</taxon>
        <taxon>Gammaproteobacteria</taxon>
        <taxon>Alteromonadales</taxon>
        <taxon>Shewanellaceae</taxon>
        <taxon>Shewanella</taxon>
    </lineage>
</organism>